<sequence length="79" mass="8374">MARIGVENSLTDVQQALQQQGHEVVTLNSEQDAQGCDCCIVTGQDSNVMGIADASIKGSVITAHGLTTDEICQQVEIRT</sequence>
<organism>
    <name type="scientific">Bacillus cereus (strain G9842)</name>
    <dbReference type="NCBI Taxonomy" id="405531"/>
    <lineage>
        <taxon>Bacteria</taxon>
        <taxon>Bacillati</taxon>
        <taxon>Bacillota</taxon>
        <taxon>Bacilli</taxon>
        <taxon>Bacillales</taxon>
        <taxon>Bacillaceae</taxon>
        <taxon>Bacillus</taxon>
        <taxon>Bacillus cereus group</taxon>
    </lineage>
</organism>
<accession>B7IN87</accession>
<name>Y3897_BACC2</name>
<proteinExistence type="inferred from homology"/>
<feature type="chain" id="PRO_1000127035" description="UPF0180 protein BCG9842_B3897">
    <location>
        <begin position="1"/>
        <end position="79"/>
    </location>
</feature>
<evidence type="ECO:0000255" key="1">
    <source>
        <dbReference type="HAMAP-Rule" id="MF_00506"/>
    </source>
</evidence>
<gene>
    <name type="ordered locus">BCG9842_B3897</name>
</gene>
<comment type="similarity">
    <text evidence="1">Belongs to the UPF0180 family.</text>
</comment>
<reference key="1">
    <citation type="submission" date="2008-10" db="EMBL/GenBank/DDBJ databases">
        <title>Genome sequence of Bacillus cereus G9842.</title>
        <authorList>
            <person name="Dodson R.J."/>
            <person name="Durkin A.S."/>
            <person name="Rosovitz M.J."/>
            <person name="Rasko D.A."/>
            <person name="Hoffmaster A."/>
            <person name="Ravel J."/>
            <person name="Sutton G."/>
        </authorList>
    </citation>
    <scope>NUCLEOTIDE SEQUENCE [LARGE SCALE GENOMIC DNA]</scope>
    <source>
        <strain>G9842</strain>
    </source>
</reference>
<protein>
    <recommendedName>
        <fullName evidence="1">UPF0180 protein BCG9842_B3897</fullName>
    </recommendedName>
</protein>
<dbReference type="EMBL" id="CP001186">
    <property type="protein sequence ID" value="ACK95139.1"/>
    <property type="molecule type" value="Genomic_DNA"/>
</dbReference>
<dbReference type="RefSeq" id="WP_000101016.1">
    <property type="nucleotide sequence ID" value="NC_011772.1"/>
</dbReference>
<dbReference type="KEGG" id="bcg:BCG9842_B3897"/>
<dbReference type="HOGENOM" id="CLU_187365_0_0_9"/>
<dbReference type="Proteomes" id="UP000006744">
    <property type="component" value="Chromosome"/>
</dbReference>
<dbReference type="HAMAP" id="MF_00506">
    <property type="entry name" value="UPF0180"/>
    <property type="match status" value="1"/>
</dbReference>
<dbReference type="InterPro" id="IPR005370">
    <property type="entry name" value="UPF0180"/>
</dbReference>
<dbReference type="NCBIfam" id="NF002845">
    <property type="entry name" value="PRK03094.1"/>
    <property type="match status" value="1"/>
</dbReference>
<dbReference type="Pfam" id="PF03698">
    <property type="entry name" value="UPF0180"/>
    <property type="match status" value="1"/>
</dbReference>